<comment type="function">
    <text evidence="1">Single strand-specific metallo-endoribonuclease involved in late-stage 70S ribosome quality control and in maturation of the 3' terminus of the 16S rRNA.</text>
</comment>
<comment type="cofactor">
    <cofactor evidence="1">
        <name>Zn(2+)</name>
        <dbReference type="ChEBI" id="CHEBI:29105"/>
    </cofactor>
    <text evidence="1">Binds 1 zinc ion.</text>
</comment>
<comment type="subcellular location">
    <subcellularLocation>
        <location evidence="1">Cytoplasm</location>
    </subcellularLocation>
</comment>
<comment type="similarity">
    <text evidence="1">Belongs to the endoribonuclease YbeY family.</text>
</comment>
<reference key="1">
    <citation type="submission" date="2008-12" db="EMBL/GenBank/DDBJ databases">
        <title>Complete sequence of chromosome of Shewanella baltica OS223.</title>
        <authorList>
            <consortium name="US DOE Joint Genome Institute"/>
            <person name="Lucas S."/>
            <person name="Copeland A."/>
            <person name="Lapidus A."/>
            <person name="Glavina del Rio T."/>
            <person name="Dalin E."/>
            <person name="Tice H."/>
            <person name="Bruce D."/>
            <person name="Goodwin L."/>
            <person name="Pitluck S."/>
            <person name="Chertkov O."/>
            <person name="Meincke L."/>
            <person name="Brettin T."/>
            <person name="Detter J.C."/>
            <person name="Han C."/>
            <person name="Kuske C.R."/>
            <person name="Larimer F."/>
            <person name="Land M."/>
            <person name="Hauser L."/>
            <person name="Kyrpides N."/>
            <person name="Ovchinnikova G."/>
            <person name="Brettar I."/>
            <person name="Rodrigues J."/>
            <person name="Konstantinidis K."/>
            <person name="Tiedje J."/>
        </authorList>
    </citation>
    <scope>NUCLEOTIDE SEQUENCE [LARGE SCALE GENOMIC DNA]</scope>
    <source>
        <strain>OS223</strain>
    </source>
</reference>
<accession>B8E6K8</accession>
<keyword id="KW-0963">Cytoplasm</keyword>
<keyword id="KW-0255">Endonuclease</keyword>
<keyword id="KW-0378">Hydrolase</keyword>
<keyword id="KW-0479">Metal-binding</keyword>
<keyword id="KW-0540">Nuclease</keyword>
<keyword id="KW-0690">Ribosome biogenesis</keyword>
<keyword id="KW-0698">rRNA processing</keyword>
<keyword id="KW-0862">Zinc</keyword>
<organism>
    <name type="scientific">Shewanella baltica (strain OS223)</name>
    <dbReference type="NCBI Taxonomy" id="407976"/>
    <lineage>
        <taxon>Bacteria</taxon>
        <taxon>Pseudomonadati</taxon>
        <taxon>Pseudomonadota</taxon>
        <taxon>Gammaproteobacteria</taxon>
        <taxon>Alteromonadales</taxon>
        <taxon>Shewanellaceae</taxon>
        <taxon>Shewanella</taxon>
    </lineage>
</organism>
<proteinExistence type="inferred from homology"/>
<dbReference type="EC" id="3.1.-.-" evidence="1"/>
<dbReference type="EMBL" id="CP001252">
    <property type="protein sequence ID" value="ACK45619.1"/>
    <property type="molecule type" value="Genomic_DNA"/>
</dbReference>
<dbReference type="RefSeq" id="WP_012587022.1">
    <property type="nucleotide sequence ID" value="NC_011663.1"/>
</dbReference>
<dbReference type="SMR" id="B8E6K8"/>
<dbReference type="KEGG" id="sbp:Sbal223_1104"/>
<dbReference type="HOGENOM" id="CLU_106710_0_1_6"/>
<dbReference type="Proteomes" id="UP000002507">
    <property type="component" value="Chromosome"/>
</dbReference>
<dbReference type="GO" id="GO:0005737">
    <property type="term" value="C:cytoplasm"/>
    <property type="evidence" value="ECO:0007669"/>
    <property type="project" value="UniProtKB-SubCell"/>
</dbReference>
<dbReference type="GO" id="GO:0004222">
    <property type="term" value="F:metalloendopeptidase activity"/>
    <property type="evidence" value="ECO:0007669"/>
    <property type="project" value="InterPro"/>
</dbReference>
<dbReference type="GO" id="GO:0004521">
    <property type="term" value="F:RNA endonuclease activity"/>
    <property type="evidence" value="ECO:0007669"/>
    <property type="project" value="UniProtKB-UniRule"/>
</dbReference>
<dbReference type="GO" id="GO:0008270">
    <property type="term" value="F:zinc ion binding"/>
    <property type="evidence" value="ECO:0007669"/>
    <property type="project" value="UniProtKB-UniRule"/>
</dbReference>
<dbReference type="GO" id="GO:0006364">
    <property type="term" value="P:rRNA processing"/>
    <property type="evidence" value="ECO:0007669"/>
    <property type="project" value="UniProtKB-UniRule"/>
</dbReference>
<dbReference type="Gene3D" id="3.40.390.30">
    <property type="entry name" value="Metalloproteases ('zincins'), catalytic domain"/>
    <property type="match status" value="1"/>
</dbReference>
<dbReference type="HAMAP" id="MF_00009">
    <property type="entry name" value="Endoribonucl_YbeY"/>
    <property type="match status" value="1"/>
</dbReference>
<dbReference type="InterPro" id="IPR023091">
    <property type="entry name" value="MetalPrtase_cat_dom_sf_prd"/>
</dbReference>
<dbReference type="InterPro" id="IPR002036">
    <property type="entry name" value="YbeY"/>
</dbReference>
<dbReference type="InterPro" id="IPR020549">
    <property type="entry name" value="YbeY_CS"/>
</dbReference>
<dbReference type="NCBIfam" id="TIGR00043">
    <property type="entry name" value="rRNA maturation RNase YbeY"/>
    <property type="match status" value="1"/>
</dbReference>
<dbReference type="PANTHER" id="PTHR46986">
    <property type="entry name" value="ENDORIBONUCLEASE YBEY, CHLOROPLASTIC"/>
    <property type="match status" value="1"/>
</dbReference>
<dbReference type="PANTHER" id="PTHR46986:SF1">
    <property type="entry name" value="ENDORIBONUCLEASE YBEY, CHLOROPLASTIC"/>
    <property type="match status" value="1"/>
</dbReference>
<dbReference type="Pfam" id="PF02130">
    <property type="entry name" value="YbeY"/>
    <property type="match status" value="1"/>
</dbReference>
<dbReference type="SUPFAM" id="SSF55486">
    <property type="entry name" value="Metalloproteases ('zincins'), catalytic domain"/>
    <property type="match status" value="1"/>
</dbReference>
<dbReference type="PROSITE" id="PS01306">
    <property type="entry name" value="UPF0054"/>
    <property type="match status" value="1"/>
</dbReference>
<evidence type="ECO:0000255" key="1">
    <source>
        <dbReference type="HAMAP-Rule" id="MF_00009"/>
    </source>
</evidence>
<name>YBEY_SHEB2</name>
<protein>
    <recommendedName>
        <fullName evidence="1">Endoribonuclease YbeY</fullName>
        <ecNumber evidence="1">3.1.-.-</ecNumber>
    </recommendedName>
</protein>
<gene>
    <name evidence="1" type="primary">ybeY</name>
    <name type="ordered locus">Sbal223_1104</name>
</gene>
<feature type="chain" id="PRO_1000199993" description="Endoribonuclease YbeY">
    <location>
        <begin position="1"/>
        <end position="153"/>
    </location>
</feature>
<feature type="binding site" evidence="1">
    <location>
        <position position="114"/>
    </location>
    <ligand>
        <name>Zn(2+)</name>
        <dbReference type="ChEBI" id="CHEBI:29105"/>
        <note>catalytic</note>
    </ligand>
</feature>
<feature type="binding site" evidence="1">
    <location>
        <position position="118"/>
    </location>
    <ligand>
        <name>Zn(2+)</name>
        <dbReference type="ChEBI" id="CHEBI:29105"/>
        <note>catalytic</note>
    </ligand>
</feature>
<feature type="binding site" evidence="1">
    <location>
        <position position="124"/>
    </location>
    <ligand>
        <name>Zn(2+)</name>
        <dbReference type="ChEBI" id="CHEBI:29105"/>
        <note>catalytic</note>
    </ligand>
</feature>
<sequence length="153" mass="17256">MSLDLALDIQHATTCDWLPTDEQFALWATTAIGNSMDEAELTIRIVDSRESQMLNSTYRGKDKPTNVLSFPFEAPPEIELPLLGDLVICAAVVENEAREQQKTLEAHWAHMVVHGCLHLLGYDHIEDEEAEEMESLETQLIEGLGFTDPYKEQ</sequence>